<organism>
    <name type="scientific">Archaeoglobus fulgidus (strain ATCC 49558 / DSM 4304 / JCM 9628 / NBRC 100126 / VC-16)</name>
    <dbReference type="NCBI Taxonomy" id="224325"/>
    <lineage>
        <taxon>Archaea</taxon>
        <taxon>Methanobacteriati</taxon>
        <taxon>Methanobacteriota</taxon>
        <taxon>Archaeoglobi</taxon>
        <taxon>Archaeoglobales</taxon>
        <taxon>Archaeoglobaceae</taxon>
        <taxon>Archaeoglobus</taxon>
    </lineage>
</organism>
<feature type="chain" id="PRO_0000159026" description="UPF0175 protein AF_0100">
    <location>
        <begin position="1"/>
        <end position="93"/>
    </location>
</feature>
<gene>
    <name type="ordered locus">AF_0100</name>
</gene>
<keyword id="KW-1185">Reference proteome</keyword>
<reference key="1">
    <citation type="journal article" date="1997" name="Nature">
        <title>The complete genome sequence of the hyperthermophilic, sulphate-reducing archaeon Archaeoglobus fulgidus.</title>
        <authorList>
            <person name="Klenk H.-P."/>
            <person name="Clayton R.A."/>
            <person name="Tomb J.-F."/>
            <person name="White O."/>
            <person name="Nelson K.E."/>
            <person name="Ketchum K.A."/>
            <person name="Dodson R.J."/>
            <person name="Gwinn M.L."/>
            <person name="Hickey E.K."/>
            <person name="Peterson J.D."/>
            <person name="Richardson D.L."/>
            <person name="Kerlavage A.R."/>
            <person name="Graham D.E."/>
            <person name="Kyrpides N.C."/>
            <person name="Fleischmann R.D."/>
            <person name="Quackenbush J."/>
            <person name="Lee N.H."/>
            <person name="Sutton G.G."/>
            <person name="Gill S.R."/>
            <person name="Kirkness E.F."/>
            <person name="Dougherty B.A."/>
            <person name="McKenney K."/>
            <person name="Adams M.D."/>
            <person name="Loftus B.J."/>
            <person name="Peterson S.N."/>
            <person name="Reich C.I."/>
            <person name="McNeil L.K."/>
            <person name="Badger J.H."/>
            <person name="Glodek A."/>
            <person name="Zhou L."/>
            <person name="Overbeek R."/>
            <person name="Gocayne J.D."/>
            <person name="Weidman J.F."/>
            <person name="McDonald L.A."/>
            <person name="Utterback T.R."/>
            <person name="Cotton M.D."/>
            <person name="Spriggs T."/>
            <person name="Artiach P."/>
            <person name="Kaine B.P."/>
            <person name="Sykes S.M."/>
            <person name="Sadow P.W."/>
            <person name="D'Andrea K.P."/>
            <person name="Bowman C."/>
            <person name="Fujii C."/>
            <person name="Garland S.A."/>
            <person name="Mason T.M."/>
            <person name="Olsen G.J."/>
            <person name="Fraser C.M."/>
            <person name="Smith H.O."/>
            <person name="Woese C.R."/>
            <person name="Venter J.C."/>
        </authorList>
    </citation>
    <scope>NUCLEOTIDE SEQUENCE [LARGE SCALE GENOMIC DNA]</scope>
    <source>
        <strain>ATCC 49558 / DSM 4304 / JCM 9628 / NBRC 100126 / VC-16</strain>
    </source>
</reference>
<name>Y100_ARCFU</name>
<accession>O30136</accession>
<evidence type="ECO:0000305" key="1"/>
<dbReference type="EMBL" id="AE000782">
    <property type="protein sequence ID" value="AAB91130.1"/>
    <property type="molecule type" value="Genomic_DNA"/>
</dbReference>
<dbReference type="PIR" id="D69262">
    <property type="entry name" value="D69262"/>
</dbReference>
<dbReference type="RefSeq" id="WP_010877614.1">
    <property type="nucleotide sequence ID" value="NC_000917.1"/>
</dbReference>
<dbReference type="SMR" id="O30136"/>
<dbReference type="STRING" id="224325.AF_0100"/>
<dbReference type="PaxDb" id="224325-AF_0100"/>
<dbReference type="DNASU" id="1483312"/>
<dbReference type="EnsemblBacteria" id="AAB91130">
    <property type="protein sequence ID" value="AAB91130"/>
    <property type="gene ID" value="AF_0100"/>
</dbReference>
<dbReference type="KEGG" id="afu:AF_0100"/>
<dbReference type="eggNOG" id="arCOG00722">
    <property type="taxonomic scope" value="Archaea"/>
</dbReference>
<dbReference type="HOGENOM" id="CLU_154570_6_0_2"/>
<dbReference type="OrthoDB" id="93800at2157"/>
<dbReference type="PhylomeDB" id="O30136"/>
<dbReference type="Proteomes" id="UP000002199">
    <property type="component" value="Chromosome"/>
</dbReference>
<dbReference type="InterPro" id="IPR005368">
    <property type="entry name" value="UPF0175"/>
</dbReference>
<dbReference type="InterPro" id="IPR052264">
    <property type="entry name" value="UPF0175_domain"/>
</dbReference>
<dbReference type="PANTHER" id="PTHR37525">
    <property type="entry name" value="UPF0175 PROTEIN SSL1255"/>
    <property type="match status" value="1"/>
</dbReference>
<dbReference type="PANTHER" id="PTHR37525:SF1">
    <property type="entry name" value="UPF0175 PROTEIN SSL1255"/>
    <property type="match status" value="1"/>
</dbReference>
<dbReference type="Pfam" id="PF03683">
    <property type="entry name" value="UPF0175"/>
    <property type="match status" value="1"/>
</dbReference>
<comment type="similarity">
    <text evidence="1">Belongs to the UPF0175 family.</text>
</comment>
<proteinExistence type="inferred from homology"/>
<sequence>MNAIWIVKGIENVVKSNPKRLEELLANLRRDKELFEEIVISAYVEGLISLSKASELLEITRDEMAEILRKRGVPLRNLNKDDLVAEVEAIKWF</sequence>
<protein>
    <recommendedName>
        <fullName>UPF0175 protein AF_0100</fullName>
    </recommendedName>
</protein>